<name>PYRB_LEIXX</name>
<comment type="function">
    <text evidence="1">Catalyzes the condensation of carbamoyl phosphate and aspartate to form carbamoyl aspartate and inorganic phosphate, the committed step in the de novo pyrimidine nucleotide biosynthesis pathway.</text>
</comment>
<comment type="catalytic activity">
    <reaction evidence="1">
        <text>carbamoyl phosphate + L-aspartate = N-carbamoyl-L-aspartate + phosphate + H(+)</text>
        <dbReference type="Rhea" id="RHEA:20013"/>
        <dbReference type="ChEBI" id="CHEBI:15378"/>
        <dbReference type="ChEBI" id="CHEBI:29991"/>
        <dbReference type="ChEBI" id="CHEBI:32814"/>
        <dbReference type="ChEBI" id="CHEBI:43474"/>
        <dbReference type="ChEBI" id="CHEBI:58228"/>
        <dbReference type="EC" id="2.1.3.2"/>
    </reaction>
</comment>
<comment type="pathway">
    <text evidence="1">Pyrimidine metabolism; UMP biosynthesis via de novo pathway; (S)-dihydroorotate from bicarbonate: step 2/3.</text>
</comment>
<comment type="subunit">
    <text evidence="1">Heterododecamer (2C3:3R2) of six catalytic PyrB chains organized as two trimers (C3), and six regulatory PyrI chains organized as three dimers (R2).</text>
</comment>
<comment type="similarity">
    <text evidence="1">Belongs to the aspartate/ornithine carbamoyltransferase superfamily. ATCase family.</text>
</comment>
<organism>
    <name type="scientific">Leifsonia xyli subsp. xyli (strain CTCB07)</name>
    <dbReference type="NCBI Taxonomy" id="281090"/>
    <lineage>
        <taxon>Bacteria</taxon>
        <taxon>Bacillati</taxon>
        <taxon>Actinomycetota</taxon>
        <taxon>Actinomycetes</taxon>
        <taxon>Micrococcales</taxon>
        <taxon>Microbacteriaceae</taxon>
        <taxon>Leifsonia</taxon>
    </lineage>
</organism>
<dbReference type="EC" id="2.1.3.2" evidence="1"/>
<dbReference type="EMBL" id="AE016822">
    <property type="protein sequence ID" value="AAT88957.1"/>
    <property type="molecule type" value="Genomic_DNA"/>
</dbReference>
<dbReference type="RefSeq" id="WP_011185953.1">
    <property type="nucleotide sequence ID" value="NC_006087.1"/>
</dbReference>
<dbReference type="SMR" id="Q6AF88"/>
<dbReference type="STRING" id="281090.Lxx11060"/>
<dbReference type="KEGG" id="lxx:Lxx11060"/>
<dbReference type="eggNOG" id="COG0540">
    <property type="taxonomic scope" value="Bacteria"/>
</dbReference>
<dbReference type="HOGENOM" id="CLU_043846_2_0_11"/>
<dbReference type="UniPathway" id="UPA00070">
    <property type="reaction ID" value="UER00116"/>
</dbReference>
<dbReference type="Proteomes" id="UP000001306">
    <property type="component" value="Chromosome"/>
</dbReference>
<dbReference type="GO" id="GO:0005829">
    <property type="term" value="C:cytosol"/>
    <property type="evidence" value="ECO:0007669"/>
    <property type="project" value="TreeGrafter"/>
</dbReference>
<dbReference type="GO" id="GO:0016597">
    <property type="term" value="F:amino acid binding"/>
    <property type="evidence" value="ECO:0007669"/>
    <property type="project" value="InterPro"/>
</dbReference>
<dbReference type="GO" id="GO:0004070">
    <property type="term" value="F:aspartate carbamoyltransferase activity"/>
    <property type="evidence" value="ECO:0007669"/>
    <property type="project" value="UniProtKB-UniRule"/>
</dbReference>
<dbReference type="GO" id="GO:0006207">
    <property type="term" value="P:'de novo' pyrimidine nucleobase biosynthetic process"/>
    <property type="evidence" value="ECO:0007669"/>
    <property type="project" value="InterPro"/>
</dbReference>
<dbReference type="GO" id="GO:0044205">
    <property type="term" value="P:'de novo' UMP biosynthetic process"/>
    <property type="evidence" value="ECO:0007669"/>
    <property type="project" value="UniProtKB-UniRule"/>
</dbReference>
<dbReference type="GO" id="GO:0006520">
    <property type="term" value="P:amino acid metabolic process"/>
    <property type="evidence" value="ECO:0007669"/>
    <property type="project" value="InterPro"/>
</dbReference>
<dbReference type="FunFam" id="3.40.50.1370:FF:000007">
    <property type="entry name" value="Aspartate carbamoyltransferase"/>
    <property type="match status" value="1"/>
</dbReference>
<dbReference type="FunFam" id="3.40.50.1370:FF:000012">
    <property type="entry name" value="Aspartate carbamoyltransferase"/>
    <property type="match status" value="1"/>
</dbReference>
<dbReference type="Gene3D" id="3.40.50.1370">
    <property type="entry name" value="Aspartate/ornithine carbamoyltransferase"/>
    <property type="match status" value="2"/>
</dbReference>
<dbReference type="HAMAP" id="MF_00001">
    <property type="entry name" value="Asp_carb_tr"/>
    <property type="match status" value="1"/>
</dbReference>
<dbReference type="InterPro" id="IPR006132">
    <property type="entry name" value="Asp/Orn_carbamoyltranf_P-bd"/>
</dbReference>
<dbReference type="InterPro" id="IPR006130">
    <property type="entry name" value="Asp/Orn_carbamoylTrfase"/>
</dbReference>
<dbReference type="InterPro" id="IPR036901">
    <property type="entry name" value="Asp/Orn_carbamoylTrfase_sf"/>
</dbReference>
<dbReference type="InterPro" id="IPR002082">
    <property type="entry name" value="Asp_carbamoyltransf"/>
</dbReference>
<dbReference type="InterPro" id="IPR006131">
    <property type="entry name" value="Asp_carbamoyltransf_Asp/Orn-bd"/>
</dbReference>
<dbReference type="NCBIfam" id="TIGR00670">
    <property type="entry name" value="asp_carb_tr"/>
    <property type="match status" value="1"/>
</dbReference>
<dbReference type="NCBIfam" id="NF002032">
    <property type="entry name" value="PRK00856.1"/>
    <property type="match status" value="1"/>
</dbReference>
<dbReference type="PANTHER" id="PTHR45753:SF6">
    <property type="entry name" value="ASPARTATE CARBAMOYLTRANSFERASE"/>
    <property type="match status" value="1"/>
</dbReference>
<dbReference type="PANTHER" id="PTHR45753">
    <property type="entry name" value="ORNITHINE CARBAMOYLTRANSFERASE, MITOCHONDRIAL"/>
    <property type="match status" value="1"/>
</dbReference>
<dbReference type="Pfam" id="PF00185">
    <property type="entry name" value="OTCace"/>
    <property type="match status" value="1"/>
</dbReference>
<dbReference type="Pfam" id="PF02729">
    <property type="entry name" value="OTCace_N"/>
    <property type="match status" value="1"/>
</dbReference>
<dbReference type="PRINTS" id="PR00100">
    <property type="entry name" value="AOTCASE"/>
</dbReference>
<dbReference type="PRINTS" id="PR00101">
    <property type="entry name" value="ATCASE"/>
</dbReference>
<dbReference type="SUPFAM" id="SSF53671">
    <property type="entry name" value="Aspartate/ornithine carbamoyltransferase"/>
    <property type="match status" value="1"/>
</dbReference>
<dbReference type="PROSITE" id="PS00097">
    <property type="entry name" value="CARBAMOYLTRANSFERASE"/>
    <property type="match status" value="1"/>
</dbReference>
<reference key="1">
    <citation type="journal article" date="2004" name="Mol. Plant Microbe Interact.">
        <title>The genome sequence of the Gram-positive sugarcane pathogen Leifsonia xyli subsp. xyli.</title>
        <authorList>
            <person name="Monteiro-Vitorello C.B."/>
            <person name="Camargo L.E.A."/>
            <person name="Van Sluys M.A."/>
            <person name="Kitajima J.P."/>
            <person name="Truffi D."/>
            <person name="do Amaral A.M."/>
            <person name="Harakava R."/>
            <person name="de Oliveira J.C.F."/>
            <person name="Wood D."/>
            <person name="de Oliveira M.C."/>
            <person name="Miyaki C.Y."/>
            <person name="Takita M.A."/>
            <person name="da Silva A.C.R."/>
            <person name="Furlan L.R."/>
            <person name="Carraro D.M."/>
            <person name="Camarotte G."/>
            <person name="Almeida N.F. Jr."/>
            <person name="Carrer H."/>
            <person name="Coutinho L.L."/>
            <person name="El-Dorry H.A."/>
            <person name="Ferro M.I.T."/>
            <person name="Gagliardi P.R."/>
            <person name="Giglioti E."/>
            <person name="Goldman M.H.S."/>
            <person name="Goldman G.H."/>
            <person name="Kimura E.T."/>
            <person name="Ferro E.S."/>
            <person name="Kuramae E.E."/>
            <person name="Lemos E.G.M."/>
            <person name="Lemos M.V.F."/>
            <person name="Mauro S.M.Z."/>
            <person name="Machado M.A."/>
            <person name="Marino C.L."/>
            <person name="Menck C.F."/>
            <person name="Nunes L.R."/>
            <person name="Oliveira R.C."/>
            <person name="Pereira G.G."/>
            <person name="Siqueira W."/>
            <person name="de Souza A.A."/>
            <person name="Tsai S.M."/>
            <person name="Zanca A.S."/>
            <person name="Simpson A.J.G."/>
            <person name="Brumbley S.M."/>
            <person name="Setubal J.C."/>
        </authorList>
    </citation>
    <scope>NUCLEOTIDE SEQUENCE [LARGE SCALE GENOMIC DNA]</scope>
    <source>
        <strain>CTCB07</strain>
    </source>
</reference>
<proteinExistence type="inferred from homology"/>
<keyword id="KW-0665">Pyrimidine biosynthesis</keyword>
<keyword id="KW-1185">Reference proteome</keyword>
<keyword id="KW-0808">Transferase</keyword>
<accession>Q6AF88</accession>
<protein>
    <recommendedName>
        <fullName evidence="1">Aspartate carbamoyltransferase catalytic subunit</fullName>
        <ecNumber evidence="1">2.1.3.2</ecNumber>
    </recommendedName>
    <alternativeName>
        <fullName evidence="1">Aspartate transcarbamylase</fullName>
        <shortName evidence="1">ATCase</shortName>
    </alternativeName>
</protein>
<evidence type="ECO:0000255" key="1">
    <source>
        <dbReference type="HAMAP-Rule" id="MF_00001"/>
    </source>
</evidence>
<sequence>MRHLLSTKTLAREDAIRLLDVAEDMADVQGREVKKLPALRGKTVVNLFFEDSTRTRISFEAAAKRLSADVITFSAKGSSVSKGESLKDTAQTLAAMGADAVVVRHHSSGAPQTLAASGWIDARIVNAGDGTHEHPTQALLDAFTMRRRLHGRGSRGRDLDGVAVTIVGDILHSRVARSNVWLLRTLGAAVTLVAPPTLLPVEVSGWPAAIGYDLDAALAADPDVVMMLRIQGERMNAAFFPTTREYSRRWGLDDERLARLRADSIVMHPGPMNRGLEISAAAADSPRSTVREQVASGVSVRMAALYLLLSGDREA</sequence>
<feature type="chain" id="PRO_0000113152" description="Aspartate carbamoyltransferase catalytic subunit">
    <location>
        <begin position="1"/>
        <end position="315"/>
    </location>
</feature>
<feature type="binding site" evidence="1">
    <location>
        <position position="54"/>
    </location>
    <ligand>
        <name>carbamoyl phosphate</name>
        <dbReference type="ChEBI" id="CHEBI:58228"/>
    </ligand>
</feature>
<feature type="binding site" evidence="1">
    <location>
        <position position="55"/>
    </location>
    <ligand>
        <name>carbamoyl phosphate</name>
        <dbReference type="ChEBI" id="CHEBI:58228"/>
    </ligand>
</feature>
<feature type="binding site" evidence="1">
    <location>
        <position position="82"/>
    </location>
    <ligand>
        <name>L-aspartate</name>
        <dbReference type="ChEBI" id="CHEBI:29991"/>
    </ligand>
</feature>
<feature type="binding site" evidence="1">
    <location>
        <position position="104"/>
    </location>
    <ligand>
        <name>carbamoyl phosphate</name>
        <dbReference type="ChEBI" id="CHEBI:58228"/>
    </ligand>
</feature>
<feature type="binding site" evidence="1">
    <location>
        <position position="134"/>
    </location>
    <ligand>
        <name>carbamoyl phosphate</name>
        <dbReference type="ChEBI" id="CHEBI:58228"/>
    </ligand>
</feature>
<feature type="binding site" evidence="1">
    <location>
        <position position="137"/>
    </location>
    <ligand>
        <name>carbamoyl phosphate</name>
        <dbReference type="ChEBI" id="CHEBI:58228"/>
    </ligand>
</feature>
<feature type="binding site" evidence="1">
    <location>
        <position position="174"/>
    </location>
    <ligand>
        <name>L-aspartate</name>
        <dbReference type="ChEBI" id="CHEBI:29991"/>
    </ligand>
</feature>
<feature type="binding site" evidence="1">
    <location>
        <position position="229"/>
    </location>
    <ligand>
        <name>L-aspartate</name>
        <dbReference type="ChEBI" id="CHEBI:29991"/>
    </ligand>
</feature>
<feature type="binding site" evidence="1">
    <location>
        <position position="270"/>
    </location>
    <ligand>
        <name>carbamoyl phosphate</name>
        <dbReference type="ChEBI" id="CHEBI:58228"/>
    </ligand>
</feature>
<feature type="binding site" evidence="1">
    <location>
        <position position="271"/>
    </location>
    <ligand>
        <name>carbamoyl phosphate</name>
        <dbReference type="ChEBI" id="CHEBI:58228"/>
    </ligand>
</feature>
<gene>
    <name evidence="1" type="primary">pyrB</name>
    <name type="ordered locus">Lxx11060</name>
</gene>